<keyword id="KW-1185">Reference proteome</keyword>
<dbReference type="EMBL" id="Z29117">
    <property type="protein sequence ID" value="CAA82382.1"/>
    <property type="molecule type" value="Genomic_DNA"/>
</dbReference>
<dbReference type="PIR" id="S40730">
    <property type="entry name" value="S40730"/>
</dbReference>
<dbReference type="RefSeq" id="NP_499114.1">
    <property type="nucleotide sequence ID" value="NM_066713.2"/>
</dbReference>
<dbReference type="FunCoup" id="P34365">
    <property type="interactions" value="337"/>
</dbReference>
<dbReference type="STRING" id="6239.C48B4.11.1"/>
<dbReference type="PaxDb" id="6239-C48B4.11"/>
<dbReference type="EnsemblMetazoa" id="C48B4.11.1">
    <property type="protein sequence ID" value="C48B4.11.1"/>
    <property type="gene ID" value="WBGene00008174"/>
</dbReference>
<dbReference type="GeneID" id="183569"/>
<dbReference type="KEGG" id="cel:CELE_C48B4.11"/>
<dbReference type="UCSC" id="C48B4.11">
    <property type="organism name" value="c. elegans"/>
</dbReference>
<dbReference type="AGR" id="WB:WBGene00008174"/>
<dbReference type="CTD" id="183569"/>
<dbReference type="WormBase" id="C48B4.11">
    <property type="protein sequence ID" value="CE00487"/>
    <property type="gene ID" value="WBGene00008174"/>
</dbReference>
<dbReference type="eggNOG" id="ENOG502TI4H">
    <property type="taxonomic scope" value="Eukaryota"/>
</dbReference>
<dbReference type="HOGENOM" id="CLU_906845_0_0_1"/>
<dbReference type="InParanoid" id="P34365"/>
<dbReference type="OMA" id="WIAIFEL"/>
<dbReference type="OrthoDB" id="5792921at2759"/>
<dbReference type="PRO" id="PR:P34365"/>
<dbReference type="Proteomes" id="UP000001940">
    <property type="component" value="Chromosome III"/>
</dbReference>
<dbReference type="Bgee" id="WBGene00008174">
    <property type="expression patterns" value="Expressed in germ line (C elegans) and 4 other cell types or tissues"/>
</dbReference>
<reference key="1">
    <citation type="journal article" date="1994" name="Nature">
        <title>2.2 Mb of contiguous nucleotide sequence from chromosome III of C. elegans.</title>
        <authorList>
            <person name="Wilson R."/>
            <person name="Ainscough R."/>
            <person name="Anderson K."/>
            <person name="Baynes C."/>
            <person name="Berks M."/>
            <person name="Bonfield J."/>
            <person name="Burton J."/>
            <person name="Connell M."/>
            <person name="Copsey T."/>
            <person name="Cooper J."/>
            <person name="Coulson A."/>
            <person name="Craxton M."/>
            <person name="Dear S."/>
            <person name="Du Z."/>
            <person name="Durbin R."/>
            <person name="Favello A."/>
            <person name="Fraser A."/>
            <person name="Fulton L."/>
            <person name="Gardner A."/>
            <person name="Green P."/>
            <person name="Hawkins T."/>
            <person name="Hillier L."/>
            <person name="Jier M."/>
            <person name="Johnston L."/>
            <person name="Jones M."/>
            <person name="Kershaw J."/>
            <person name="Kirsten J."/>
            <person name="Laisster N."/>
            <person name="Latreille P."/>
            <person name="Lightning J."/>
            <person name="Lloyd C."/>
            <person name="Mortimore B."/>
            <person name="O'Callaghan M."/>
            <person name="Parsons J."/>
            <person name="Percy C."/>
            <person name="Rifken L."/>
            <person name="Roopra A."/>
            <person name="Saunders D."/>
            <person name="Shownkeen R."/>
            <person name="Sims M."/>
            <person name="Smaldon N."/>
            <person name="Smith A."/>
            <person name="Smith M."/>
            <person name="Sonnhammer E."/>
            <person name="Staden R."/>
            <person name="Sulston J."/>
            <person name="Thierry-Mieg J."/>
            <person name="Thomas K."/>
            <person name="Vaudin M."/>
            <person name="Vaughan K."/>
            <person name="Waterston R."/>
            <person name="Watson A."/>
            <person name="Weinstock L."/>
            <person name="Wilkinson-Sproat J."/>
            <person name="Wohldman P."/>
        </authorList>
    </citation>
    <scope>NUCLEOTIDE SEQUENCE [LARGE SCALE GENOMIC DNA]</scope>
    <source>
        <strain>Bristol N2</strain>
    </source>
</reference>
<reference key="2">
    <citation type="journal article" date="1998" name="Science">
        <title>Genome sequence of the nematode C. elegans: a platform for investigating biology.</title>
        <authorList>
            <consortium name="The C. elegans sequencing consortium"/>
        </authorList>
    </citation>
    <scope>NUCLEOTIDE SEQUENCE [LARGE SCALE GENOMIC DNA]</scope>
    <source>
        <strain>Bristol N2</strain>
    </source>
</reference>
<proteinExistence type="predicted"/>
<sequence length="307" mass="35987">MSKYESEFSCQDKFSVFYGTVATLFFTAMTTLTCPFQQLFIFLAFFEFAVVALYVCKSRFLQVLHFQYQSVAYCVPIFLFVTSIYYEFYPKETHEFLESFNFKIVKDFIEEIPIFFPSALWFLWTTRLFHTHTVLVRLNTEYRLDDPKSHDLGPIRQSSFHSSLNIAAITFFSILAYSGNESIENICFWIAIFELIMTVTYVFNNSWIMMIHFVGQAIVFSVIFFLLCCLLAYEYSPVAALEFLDSYGLVQVKSYVVRSPFFVASALSAVWFSRMMATHVFLVEVATDTRIHRHQMSNHFNRLIQNI</sequence>
<protein>
    <recommendedName>
        <fullName>Uncharacterized protein C48B4.11</fullName>
    </recommendedName>
</protein>
<feature type="chain" id="PRO_0000065252" description="Uncharacterized protein C48B4.11">
    <location>
        <begin position="1"/>
        <end position="307"/>
    </location>
</feature>
<name>YLHA_CAEEL</name>
<accession>P34365</accession>
<organism>
    <name type="scientific">Caenorhabditis elegans</name>
    <dbReference type="NCBI Taxonomy" id="6239"/>
    <lineage>
        <taxon>Eukaryota</taxon>
        <taxon>Metazoa</taxon>
        <taxon>Ecdysozoa</taxon>
        <taxon>Nematoda</taxon>
        <taxon>Chromadorea</taxon>
        <taxon>Rhabditida</taxon>
        <taxon>Rhabditina</taxon>
        <taxon>Rhabditomorpha</taxon>
        <taxon>Rhabditoidea</taxon>
        <taxon>Rhabditidae</taxon>
        <taxon>Peloderinae</taxon>
        <taxon>Caenorhabditis</taxon>
    </lineage>
</organism>
<gene>
    <name type="ORF">C48B4.11</name>
</gene>